<gene>
    <name type="ORF">ZK112.5</name>
</gene>
<keyword id="KW-1185">Reference proteome</keyword>
<name>YOG5_CAEEL</name>
<feature type="chain" id="PRO_0000065502" description="Uncharacterized protein ZK112.5">
    <location>
        <begin position="1"/>
        <end position="159"/>
    </location>
</feature>
<sequence>MNPKIEDSEFNWENEDIVMKLVDEKGKAHPVSKAELLESLESRKLGLETRVLDKYHENHVAFENVLVLDAPQDLETIVNLLLPWYMGKTLTLFEGPLNYPDSSRLAQIISKHNVDIVLGSDYNYSIPNPEYLKLFPVPSLKLVDLPNFESISNYLTISR</sequence>
<organism>
    <name type="scientific">Caenorhabditis elegans</name>
    <dbReference type="NCBI Taxonomy" id="6239"/>
    <lineage>
        <taxon>Eukaryota</taxon>
        <taxon>Metazoa</taxon>
        <taxon>Ecdysozoa</taxon>
        <taxon>Nematoda</taxon>
        <taxon>Chromadorea</taxon>
        <taxon>Rhabditida</taxon>
        <taxon>Rhabditina</taxon>
        <taxon>Rhabditomorpha</taxon>
        <taxon>Rhabditoidea</taxon>
        <taxon>Rhabditidae</taxon>
        <taxon>Peloderinae</taxon>
        <taxon>Caenorhabditis</taxon>
    </lineage>
</organism>
<accession>P34614</accession>
<dbReference type="EMBL" id="FO080308">
    <property type="protein sequence ID" value="CCD62766.1"/>
    <property type="molecule type" value="Genomic_DNA"/>
</dbReference>
<dbReference type="PIR" id="S44889">
    <property type="entry name" value="S44889"/>
</dbReference>
<dbReference type="RefSeq" id="NP_498685.1">
    <property type="nucleotide sequence ID" value="NM_066284.1"/>
</dbReference>
<dbReference type="SMR" id="P34614"/>
<dbReference type="FunCoup" id="P34614">
    <property type="interactions" value="98"/>
</dbReference>
<dbReference type="STRING" id="6239.ZK112.5.1"/>
<dbReference type="PaxDb" id="6239-ZK112.5"/>
<dbReference type="EnsemblMetazoa" id="ZK112.5.1">
    <property type="protein sequence ID" value="ZK112.5.1"/>
    <property type="gene ID" value="WBGene00022661"/>
</dbReference>
<dbReference type="KEGG" id="cel:CELE_ZK112.6"/>
<dbReference type="UCSC" id="ZK112.5">
    <property type="organism name" value="c. elegans"/>
</dbReference>
<dbReference type="CTD" id="191228"/>
<dbReference type="WormBase" id="ZK112.5">
    <property type="protein sequence ID" value="CE00376"/>
    <property type="gene ID" value="WBGene00022661"/>
</dbReference>
<dbReference type="eggNOG" id="ENOG502RT75">
    <property type="taxonomic scope" value="Eukaryota"/>
</dbReference>
<dbReference type="HOGENOM" id="CLU_1662376_0_0_1"/>
<dbReference type="InParanoid" id="P34614"/>
<dbReference type="OrthoDB" id="5830402at2759"/>
<dbReference type="PRO" id="PR:P34614"/>
<dbReference type="Proteomes" id="UP000001940">
    <property type="component" value="Chromosome III"/>
</dbReference>
<dbReference type="Bgee" id="WBGene00022661">
    <property type="expression patterns" value="Expressed in embryo and 4 other cell types or tissues"/>
</dbReference>
<reference key="1">
    <citation type="journal article" date="1994" name="Nature">
        <title>2.2 Mb of contiguous nucleotide sequence from chromosome III of C. elegans.</title>
        <authorList>
            <person name="Wilson R."/>
            <person name="Ainscough R."/>
            <person name="Anderson K."/>
            <person name="Baynes C."/>
            <person name="Berks M."/>
            <person name="Bonfield J."/>
            <person name="Burton J."/>
            <person name="Connell M."/>
            <person name="Copsey T."/>
            <person name="Cooper J."/>
            <person name="Coulson A."/>
            <person name="Craxton M."/>
            <person name="Dear S."/>
            <person name="Du Z."/>
            <person name="Durbin R."/>
            <person name="Favello A."/>
            <person name="Fraser A."/>
            <person name="Fulton L."/>
            <person name="Gardner A."/>
            <person name="Green P."/>
            <person name="Hawkins T."/>
            <person name="Hillier L."/>
            <person name="Jier M."/>
            <person name="Johnston L."/>
            <person name="Jones M."/>
            <person name="Kershaw J."/>
            <person name="Kirsten J."/>
            <person name="Laisster N."/>
            <person name="Latreille P."/>
            <person name="Lightning J."/>
            <person name="Lloyd C."/>
            <person name="Mortimore B."/>
            <person name="O'Callaghan M."/>
            <person name="Parsons J."/>
            <person name="Percy C."/>
            <person name="Rifken L."/>
            <person name="Roopra A."/>
            <person name="Saunders D."/>
            <person name="Shownkeen R."/>
            <person name="Sims M."/>
            <person name="Smaldon N."/>
            <person name="Smith A."/>
            <person name="Smith M."/>
            <person name="Sonnhammer E."/>
            <person name="Staden R."/>
            <person name="Sulston J."/>
            <person name="Thierry-Mieg J."/>
            <person name="Thomas K."/>
            <person name="Vaudin M."/>
            <person name="Vaughan K."/>
            <person name="Waterston R."/>
            <person name="Watson A."/>
            <person name="Weinstock L."/>
            <person name="Wilkinson-Sproat J."/>
            <person name="Wohldman P."/>
        </authorList>
    </citation>
    <scope>NUCLEOTIDE SEQUENCE [LARGE SCALE GENOMIC DNA]</scope>
    <source>
        <strain>Bristol N2</strain>
    </source>
</reference>
<reference key="2">
    <citation type="journal article" date="1998" name="Science">
        <title>Genome sequence of the nematode C. elegans: a platform for investigating biology.</title>
        <authorList>
            <consortium name="The C. elegans sequencing consortium"/>
        </authorList>
    </citation>
    <scope>NUCLEOTIDE SEQUENCE [LARGE SCALE GENOMIC DNA]</scope>
    <source>
        <strain>Bristol N2</strain>
    </source>
</reference>
<proteinExistence type="predicted"/>
<protein>
    <recommendedName>
        <fullName>Uncharacterized protein ZK112.5</fullName>
    </recommendedName>
</protein>